<keyword id="KW-0093">Biotin biosynthesis</keyword>
<keyword id="KW-0663">Pyridoxal phosphate</keyword>
<keyword id="KW-1185">Reference proteome</keyword>
<keyword id="KW-0808">Transferase</keyword>
<proteinExistence type="inferred from homology"/>
<accession>A7HG96</accession>
<organism>
    <name type="scientific">Anaeromyxobacter sp. (strain Fw109-5)</name>
    <dbReference type="NCBI Taxonomy" id="404589"/>
    <lineage>
        <taxon>Bacteria</taxon>
        <taxon>Pseudomonadati</taxon>
        <taxon>Myxococcota</taxon>
        <taxon>Myxococcia</taxon>
        <taxon>Myxococcales</taxon>
        <taxon>Cystobacterineae</taxon>
        <taxon>Anaeromyxobacteraceae</taxon>
        <taxon>Anaeromyxobacter</taxon>
    </lineage>
</organism>
<protein>
    <recommendedName>
        <fullName evidence="1">8-amino-7-oxononanoate synthase</fullName>
        <shortName evidence="1">AONS</shortName>
        <ecNumber evidence="1">2.3.1.47</ecNumber>
    </recommendedName>
    <alternativeName>
        <fullName evidence="1">7-keto-8-amino-pelargonic acid synthase</fullName>
        <shortName evidence="1">7-KAP synthase</shortName>
        <shortName evidence="1">KAPA synthase</shortName>
    </alternativeName>
    <alternativeName>
        <fullName evidence="1">8-amino-7-ketopelargonate synthase</fullName>
    </alternativeName>
</protein>
<sequence>MARAPLDWIDRELEALEAKGLRRALEPLASPQGPVVEVGGRRLVNLCSNDYLGLAADPRLRSAAAEAAEREGAGSGASRLVAGDLPVHGALERAIAGHAGTEAALLFGSGYHANAGVPPALVGRDDAVFSDVLNHASIVDGCLLSRAKLVRYRHADVQELADLLAGTPARRKLVVTDAIFSMDGDAAPLREIAGLCDRHGAMLYVDEAHATGVLGPRGGGLAEALGVADRVDVHMGTLGKALGAAGAFVAGERRLVDLLVSRARTFVFTTAPAPAASAAALAALAIVEAEPERRARVLALAARMRVGLERLGFDVSRVAAPIFPVILGDEARAVAASRALRERGFFVRAIRPPTVPRGTSRLRVTLTAAHGEAQVDAFLGALEEVLRVPGGGAPRVL</sequence>
<reference key="1">
    <citation type="journal article" date="2015" name="Genome Announc.">
        <title>Complete genome sequence of Anaeromyxobacter sp. Fw109-5, an anaerobic, metal-reducing bacterium isolated from a contaminated subsurface environment.</title>
        <authorList>
            <person name="Hwang C."/>
            <person name="Copeland A."/>
            <person name="Lucas S."/>
            <person name="Lapidus A."/>
            <person name="Barry K."/>
            <person name="Glavina Del Rio T."/>
            <person name="Dalin E."/>
            <person name="Tice H."/>
            <person name="Pitluck S."/>
            <person name="Sims D."/>
            <person name="Brettin T."/>
            <person name="Bruce D.C."/>
            <person name="Detter J.C."/>
            <person name="Han C.S."/>
            <person name="Schmutz J."/>
            <person name="Larimer F.W."/>
            <person name="Land M.L."/>
            <person name="Hauser L.J."/>
            <person name="Kyrpides N."/>
            <person name="Lykidis A."/>
            <person name="Richardson P."/>
            <person name="Belieav A."/>
            <person name="Sanford R.A."/>
            <person name="Loeffler F.E."/>
            <person name="Fields M.W."/>
        </authorList>
    </citation>
    <scope>NUCLEOTIDE SEQUENCE [LARGE SCALE GENOMIC DNA]</scope>
    <source>
        <strain>Fw109-5</strain>
    </source>
</reference>
<comment type="function">
    <text evidence="1">Catalyzes the decarboxylative condensation of pimeloyl-[acyl-carrier protein] and L-alanine to produce 8-amino-7-oxononanoate (AON), [acyl-carrier protein], and carbon dioxide.</text>
</comment>
<comment type="catalytic activity">
    <reaction evidence="1">
        <text>6-carboxyhexanoyl-[ACP] + L-alanine + H(+) = (8S)-8-amino-7-oxononanoate + holo-[ACP] + CO2</text>
        <dbReference type="Rhea" id="RHEA:42288"/>
        <dbReference type="Rhea" id="RHEA-COMP:9685"/>
        <dbReference type="Rhea" id="RHEA-COMP:9955"/>
        <dbReference type="ChEBI" id="CHEBI:15378"/>
        <dbReference type="ChEBI" id="CHEBI:16526"/>
        <dbReference type="ChEBI" id="CHEBI:57972"/>
        <dbReference type="ChEBI" id="CHEBI:64479"/>
        <dbReference type="ChEBI" id="CHEBI:78846"/>
        <dbReference type="ChEBI" id="CHEBI:149468"/>
        <dbReference type="EC" id="2.3.1.47"/>
    </reaction>
</comment>
<comment type="cofactor">
    <cofactor evidence="1">
        <name>pyridoxal 5'-phosphate</name>
        <dbReference type="ChEBI" id="CHEBI:597326"/>
    </cofactor>
</comment>
<comment type="pathway">
    <text evidence="1">Cofactor biosynthesis; biotin biosynthesis.</text>
</comment>
<comment type="subunit">
    <text evidence="1">Homodimer.</text>
</comment>
<comment type="similarity">
    <text evidence="1">Belongs to the class-II pyridoxal-phosphate-dependent aminotransferase family. BioF subfamily.</text>
</comment>
<gene>
    <name evidence="1" type="primary">bioF</name>
    <name type="ordered locus">Anae109_3561</name>
</gene>
<feature type="chain" id="PRO_0000380896" description="8-amino-7-oxononanoate synthase">
    <location>
        <begin position="1"/>
        <end position="397"/>
    </location>
</feature>
<feature type="binding site" evidence="1">
    <location>
        <position position="23"/>
    </location>
    <ligand>
        <name>substrate</name>
    </ligand>
</feature>
<feature type="binding site" evidence="1">
    <location>
        <begin position="110"/>
        <end position="111"/>
    </location>
    <ligand>
        <name>pyridoxal 5'-phosphate</name>
        <dbReference type="ChEBI" id="CHEBI:597326"/>
    </ligand>
</feature>
<feature type="binding site" evidence="1">
    <location>
        <position position="135"/>
    </location>
    <ligand>
        <name>substrate</name>
    </ligand>
</feature>
<feature type="binding site" evidence="1">
    <location>
        <position position="181"/>
    </location>
    <ligand>
        <name>pyridoxal 5'-phosphate</name>
        <dbReference type="ChEBI" id="CHEBI:597326"/>
    </ligand>
</feature>
<feature type="binding site" evidence="1">
    <location>
        <position position="209"/>
    </location>
    <ligand>
        <name>pyridoxal 5'-phosphate</name>
        <dbReference type="ChEBI" id="CHEBI:597326"/>
    </ligand>
</feature>
<feature type="binding site" evidence="1">
    <location>
        <position position="237"/>
    </location>
    <ligand>
        <name>pyridoxal 5'-phosphate</name>
        <dbReference type="ChEBI" id="CHEBI:597326"/>
    </ligand>
</feature>
<feature type="binding site" evidence="1">
    <location>
        <position position="354"/>
    </location>
    <ligand>
        <name>substrate</name>
    </ligand>
</feature>
<feature type="modified residue" description="N6-(pyridoxal phosphate)lysine" evidence="1">
    <location>
        <position position="240"/>
    </location>
</feature>
<dbReference type="EC" id="2.3.1.47" evidence="1"/>
<dbReference type="EMBL" id="CP000769">
    <property type="protein sequence ID" value="ABS27742.1"/>
    <property type="molecule type" value="Genomic_DNA"/>
</dbReference>
<dbReference type="RefSeq" id="WP_012098366.1">
    <property type="nucleotide sequence ID" value="NC_009675.1"/>
</dbReference>
<dbReference type="SMR" id="A7HG96"/>
<dbReference type="STRING" id="404589.Anae109_3561"/>
<dbReference type="KEGG" id="afw:Anae109_3561"/>
<dbReference type="eggNOG" id="COG0156">
    <property type="taxonomic scope" value="Bacteria"/>
</dbReference>
<dbReference type="HOGENOM" id="CLU_015846_11_0_7"/>
<dbReference type="OrthoDB" id="9807157at2"/>
<dbReference type="UniPathway" id="UPA00078"/>
<dbReference type="Proteomes" id="UP000006382">
    <property type="component" value="Chromosome"/>
</dbReference>
<dbReference type="GO" id="GO:0008710">
    <property type="term" value="F:8-amino-7-oxononanoate synthase activity"/>
    <property type="evidence" value="ECO:0007669"/>
    <property type="project" value="UniProtKB-EC"/>
</dbReference>
<dbReference type="GO" id="GO:0030170">
    <property type="term" value="F:pyridoxal phosphate binding"/>
    <property type="evidence" value="ECO:0007669"/>
    <property type="project" value="InterPro"/>
</dbReference>
<dbReference type="GO" id="GO:0009102">
    <property type="term" value="P:biotin biosynthetic process"/>
    <property type="evidence" value="ECO:0007669"/>
    <property type="project" value="UniProtKB-UniPathway"/>
</dbReference>
<dbReference type="CDD" id="cd06454">
    <property type="entry name" value="KBL_like"/>
    <property type="match status" value="1"/>
</dbReference>
<dbReference type="Gene3D" id="3.90.1150.10">
    <property type="entry name" value="Aspartate Aminotransferase, domain 1"/>
    <property type="match status" value="1"/>
</dbReference>
<dbReference type="Gene3D" id="3.40.640.10">
    <property type="entry name" value="Type I PLP-dependent aspartate aminotransferase-like (Major domain)"/>
    <property type="match status" value="1"/>
</dbReference>
<dbReference type="HAMAP" id="MF_01693">
    <property type="entry name" value="BioF_aminotrans_2"/>
    <property type="match status" value="1"/>
</dbReference>
<dbReference type="InterPro" id="IPR001917">
    <property type="entry name" value="Aminotrans_II_pyridoxalP_BS"/>
</dbReference>
<dbReference type="InterPro" id="IPR004839">
    <property type="entry name" value="Aminotransferase_I/II_large"/>
</dbReference>
<dbReference type="InterPro" id="IPR050087">
    <property type="entry name" value="AON_synthase_class-II"/>
</dbReference>
<dbReference type="InterPro" id="IPR004723">
    <property type="entry name" value="AONS_Archaea/Proteobacteria"/>
</dbReference>
<dbReference type="InterPro" id="IPR022834">
    <property type="entry name" value="AONS_Proteobacteria"/>
</dbReference>
<dbReference type="InterPro" id="IPR015424">
    <property type="entry name" value="PyrdxlP-dep_Trfase"/>
</dbReference>
<dbReference type="InterPro" id="IPR015421">
    <property type="entry name" value="PyrdxlP-dep_Trfase_major"/>
</dbReference>
<dbReference type="InterPro" id="IPR015422">
    <property type="entry name" value="PyrdxlP-dep_Trfase_small"/>
</dbReference>
<dbReference type="NCBIfam" id="TIGR00858">
    <property type="entry name" value="bioF"/>
    <property type="match status" value="1"/>
</dbReference>
<dbReference type="PANTHER" id="PTHR13693:SF100">
    <property type="entry name" value="8-AMINO-7-OXONONANOATE SYNTHASE"/>
    <property type="match status" value="1"/>
</dbReference>
<dbReference type="PANTHER" id="PTHR13693">
    <property type="entry name" value="CLASS II AMINOTRANSFERASE/8-AMINO-7-OXONONANOATE SYNTHASE"/>
    <property type="match status" value="1"/>
</dbReference>
<dbReference type="Pfam" id="PF00155">
    <property type="entry name" value="Aminotran_1_2"/>
    <property type="match status" value="1"/>
</dbReference>
<dbReference type="SUPFAM" id="SSF53383">
    <property type="entry name" value="PLP-dependent transferases"/>
    <property type="match status" value="1"/>
</dbReference>
<dbReference type="PROSITE" id="PS00599">
    <property type="entry name" value="AA_TRANSFER_CLASS_2"/>
    <property type="match status" value="1"/>
</dbReference>
<evidence type="ECO:0000255" key="1">
    <source>
        <dbReference type="HAMAP-Rule" id="MF_01693"/>
    </source>
</evidence>
<name>BIOF_ANADF</name>